<protein>
    <recommendedName>
        <fullName evidence="1">Phospho-N-acetylmuramoyl-pentapeptide-transferase</fullName>
        <ecNumber evidence="1">2.7.8.13</ecNumber>
    </recommendedName>
    <alternativeName>
        <fullName evidence="1">UDP-MurNAc-pentapeptide phosphotransferase</fullName>
    </alternativeName>
</protein>
<reference key="1">
    <citation type="journal article" date="2009" name="BMC Genomics">
        <title>Evidence for niche adaptation in the genome of the bovine pathogen Streptococcus uberis.</title>
        <authorList>
            <person name="Ward P.N."/>
            <person name="Holden M.T.G."/>
            <person name="Leigh J.A."/>
            <person name="Lennard N."/>
            <person name="Bignell A."/>
            <person name="Barron A."/>
            <person name="Clark L."/>
            <person name="Quail M.A."/>
            <person name="Woodward J."/>
            <person name="Barrell B.G."/>
            <person name="Egan S.A."/>
            <person name="Field T.R."/>
            <person name="Maskell D."/>
            <person name="Kehoe M."/>
            <person name="Dowson C.G."/>
            <person name="Chanter N."/>
            <person name="Whatmore A.M."/>
            <person name="Bentley S.D."/>
            <person name="Parkhill J."/>
        </authorList>
    </citation>
    <scope>NUCLEOTIDE SEQUENCE [LARGE SCALE GENOMIC DNA]</scope>
    <source>
        <strain>ATCC BAA-854 / 0140J</strain>
    </source>
</reference>
<keyword id="KW-0131">Cell cycle</keyword>
<keyword id="KW-0132">Cell division</keyword>
<keyword id="KW-1003">Cell membrane</keyword>
<keyword id="KW-0133">Cell shape</keyword>
<keyword id="KW-0961">Cell wall biogenesis/degradation</keyword>
<keyword id="KW-0460">Magnesium</keyword>
<keyword id="KW-0472">Membrane</keyword>
<keyword id="KW-0479">Metal-binding</keyword>
<keyword id="KW-0573">Peptidoglycan synthesis</keyword>
<keyword id="KW-1185">Reference proteome</keyword>
<keyword id="KW-0808">Transferase</keyword>
<keyword id="KW-0812">Transmembrane</keyword>
<keyword id="KW-1133">Transmembrane helix</keyword>
<evidence type="ECO:0000255" key="1">
    <source>
        <dbReference type="HAMAP-Rule" id="MF_00038"/>
    </source>
</evidence>
<name>MRAY_STRU0</name>
<feature type="chain" id="PRO_1000117200" description="Phospho-N-acetylmuramoyl-pentapeptide-transferase">
    <location>
        <begin position="1"/>
        <end position="335"/>
    </location>
</feature>
<feature type="transmembrane region" description="Helical" evidence="1">
    <location>
        <begin position="3"/>
        <end position="23"/>
    </location>
</feature>
<feature type="transmembrane region" description="Helical" evidence="1">
    <location>
        <begin position="53"/>
        <end position="73"/>
    </location>
</feature>
<feature type="transmembrane region" description="Helical" evidence="1">
    <location>
        <begin position="78"/>
        <end position="98"/>
    </location>
</feature>
<feature type="transmembrane region" description="Helical" evidence="1">
    <location>
        <begin position="118"/>
        <end position="138"/>
    </location>
</feature>
<feature type="transmembrane region" description="Helical" evidence="1">
    <location>
        <begin position="143"/>
        <end position="163"/>
    </location>
</feature>
<feature type="transmembrane region" description="Helical" evidence="1">
    <location>
        <begin position="175"/>
        <end position="195"/>
    </location>
</feature>
<feature type="transmembrane region" description="Helical" evidence="1">
    <location>
        <begin position="200"/>
        <end position="220"/>
    </location>
</feature>
<feature type="transmembrane region" description="Helical" evidence="1">
    <location>
        <begin position="226"/>
        <end position="246"/>
    </location>
</feature>
<feature type="transmembrane region" description="Helical" evidence="1">
    <location>
        <begin position="251"/>
        <end position="271"/>
    </location>
</feature>
<feature type="transmembrane region" description="Helical" evidence="1">
    <location>
        <begin position="314"/>
        <end position="334"/>
    </location>
</feature>
<gene>
    <name evidence="1" type="primary">mraY</name>
    <name type="ordered locus">SUB1418</name>
</gene>
<dbReference type="EC" id="2.7.8.13" evidence="1"/>
<dbReference type="EMBL" id="AM946015">
    <property type="protein sequence ID" value="CAR43074.1"/>
    <property type="molecule type" value="Genomic_DNA"/>
</dbReference>
<dbReference type="RefSeq" id="WP_015911738.1">
    <property type="nucleotide sequence ID" value="NC_012004.1"/>
</dbReference>
<dbReference type="SMR" id="B9DV75"/>
<dbReference type="STRING" id="218495.SUB1418"/>
<dbReference type="KEGG" id="sub:SUB1418"/>
<dbReference type="eggNOG" id="COG0472">
    <property type="taxonomic scope" value="Bacteria"/>
</dbReference>
<dbReference type="HOGENOM" id="CLU_023982_0_1_9"/>
<dbReference type="OrthoDB" id="9805475at2"/>
<dbReference type="UniPathway" id="UPA00219"/>
<dbReference type="Proteomes" id="UP000000449">
    <property type="component" value="Chromosome"/>
</dbReference>
<dbReference type="GO" id="GO:0005886">
    <property type="term" value="C:plasma membrane"/>
    <property type="evidence" value="ECO:0007669"/>
    <property type="project" value="UniProtKB-SubCell"/>
</dbReference>
<dbReference type="GO" id="GO:0046872">
    <property type="term" value="F:metal ion binding"/>
    <property type="evidence" value="ECO:0007669"/>
    <property type="project" value="UniProtKB-KW"/>
</dbReference>
<dbReference type="GO" id="GO:0008963">
    <property type="term" value="F:phospho-N-acetylmuramoyl-pentapeptide-transferase activity"/>
    <property type="evidence" value="ECO:0007669"/>
    <property type="project" value="UniProtKB-UniRule"/>
</dbReference>
<dbReference type="GO" id="GO:0051301">
    <property type="term" value="P:cell division"/>
    <property type="evidence" value="ECO:0007669"/>
    <property type="project" value="UniProtKB-KW"/>
</dbReference>
<dbReference type="GO" id="GO:0071555">
    <property type="term" value="P:cell wall organization"/>
    <property type="evidence" value="ECO:0007669"/>
    <property type="project" value="UniProtKB-KW"/>
</dbReference>
<dbReference type="GO" id="GO:0009252">
    <property type="term" value="P:peptidoglycan biosynthetic process"/>
    <property type="evidence" value="ECO:0007669"/>
    <property type="project" value="UniProtKB-UniRule"/>
</dbReference>
<dbReference type="GO" id="GO:0008360">
    <property type="term" value="P:regulation of cell shape"/>
    <property type="evidence" value="ECO:0007669"/>
    <property type="project" value="UniProtKB-KW"/>
</dbReference>
<dbReference type="CDD" id="cd06852">
    <property type="entry name" value="GT_MraY"/>
    <property type="match status" value="1"/>
</dbReference>
<dbReference type="HAMAP" id="MF_00038">
    <property type="entry name" value="MraY"/>
    <property type="match status" value="1"/>
</dbReference>
<dbReference type="InterPro" id="IPR000715">
    <property type="entry name" value="Glycosyl_transferase_4"/>
</dbReference>
<dbReference type="InterPro" id="IPR003524">
    <property type="entry name" value="PNAcMuramoyl-5peptid_Trfase"/>
</dbReference>
<dbReference type="InterPro" id="IPR018480">
    <property type="entry name" value="PNAcMuramoyl-5peptid_Trfase_CS"/>
</dbReference>
<dbReference type="NCBIfam" id="TIGR00445">
    <property type="entry name" value="mraY"/>
    <property type="match status" value="1"/>
</dbReference>
<dbReference type="PANTHER" id="PTHR22926">
    <property type="entry name" value="PHOSPHO-N-ACETYLMURAMOYL-PENTAPEPTIDE-TRANSFERASE"/>
    <property type="match status" value="1"/>
</dbReference>
<dbReference type="PANTHER" id="PTHR22926:SF5">
    <property type="entry name" value="PHOSPHO-N-ACETYLMURAMOYL-PENTAPEPTIDE-TRANSFERASE HOMOLOG"/>
    <property type="match status" value="1"/>
</dbReference>
<dbReference type="Pfam" id="PF00953">
    <property type="entry name" value="Glycos_transf_4"/>
    <property type="match status" value="1"/>
</dbReference>
<dbReference type="Pfam" id="PF10555">
    <property type="entry name" value="MraY_sig1"/>
    <property type="match status" value="1"/>
</dbReference>
<dbReference type="PROSITE" id="PS01348">
    <property type="entry name" value="MRAY_2"/>
    <property type="match status" value="1"/>
</dbReference>
<sequence>MFLTLIAGLISLLLTALIMPHFIKFYQMKKIGGQQMHEDVKQHLAKAGTPTMGGTVFLLVASFVSFLFAILFFSHGKSMGLITGILAIVLIYGFIGFLDDFLKIFKQINEGLTPIQKLSLQIVGGLIFYFLHVVPSGIDAINVFGFPVHLGLLYIFFVLFWVVGFSNAVNLTDGIDGLASISVVISLLTYSVIAIHQNQYDVLLLCGIMIGALLGFFIFNHKPAKVFMGDVGSLALGAMLAAISIALRQEWTLLVIGLVYVFETSSVMLQVSYFKYTKKKFGEGRRIFRMTPFHHHLELGGLSGKAERWSEWKVDAFLWSVGAVSSLIVLAILYL</sequence>
<accession>B9DV75</accession>
<organism>
    <name type="scientific">Streptococcus uberis (strain ATCC BAA-854 / 0140J)</name>
    <dbReference type="NCBI Taxonomy" id="218495"/>
    <lineage>
        <taxon>Bacteria</taxon>
        <taxon>Bacillati</taxon>
        <taxon>Bacillota</taxon>
        <taxon>Bacilli</taxon>
        <taxon>Lactobacillales</taxon>
        <taxon>Streptococcaceae</taxon>
        <taxon>Streptococcus</taxon>
    </lineage>
</organism>
<comment type="function">
    <text evidence="1">Catalyzes the initial step of the lipid cycle reactions in the biosynthesis of the cell wall peptidoglycan: transfers peptidoglycan precursor phospho-MurNAc-pentapeptide from UDP-MurNAc-pentapeptide onto the lipid carrier undecaprenyl phosphate, yielding undecaprenyl-pyrophosphoryl-MurNAc-pentapeptide, known as lipid I.</text>
</comment>
<comment type="catalytic activity">
    <reaction evidence="1">
        <text>UDP-N-acetyl-alpha-D-muramoyl-L-alanyl-gamma-D-glutamyl-L-lysyl-D-alanyl-D-alanine + di-trans,octa-cis-undecaprenyl phosphate = Mur2Ac(oyl-L-Ala-gamma-D-Glu-L-Lys-D-Ala-D-Ala)-di-trans,octa-cis-undecaprenyl diphosphate + UMP</text>
        <dbReference type="Rhea" id="RHEA:21920"/>
        <dbReference type="ChEBI" id="CHEBI:57865"/>
        <dbReference type="ChEBI" id="CHEBI:60032"/>
        <dbReference type="ChEBI" id="CHEBI:60392"/>
        <dbReference type="ChEBI" id="CHEBI:70758"/>
        <dbReference type="EC" id="2.7.8.13"/>
    </reaction>
</comment>
<comment type="cofactor">
    <cofactor evidence="1">
        <name>Mg(2+)</name>
        <dbReference type="ChEBI" id="CHEBI:18420"/>
    </cofactor>
</comment>
<comment type="pathway">
    <text evidence="1">Cell wall biogenesis; peptidoglycan biosynthesis.</text>
</comment>
<comment type="subcellular location">
    <subcellularLocation>
        <location evidence="1">Cell membrane</location>
        <topology evidence="1">Multi-pass membrane protein</topology>
    </subcellularLocation>
</comment>
<comment type="similarity">
    <text evidence="1">Belongs to the glycosyltransferase 4 family. MraY subfamily.</text>
</comment>
<proteinExistence type="inferred from homology"/>